<keyword id="KW-0067">ATP-binding</keyword>
<keyword id="KW-0963">Cytoplasm</keyword>
<keyword id="KW-0391">Immunity</keyword>
<keyword id="KW-0399">Innate immunity</keyword>
<keyword id="KW-1017">Isopeptide bond</keyword>
<keyword id="KW-0547">Nucleotide-binding</keyword>
<keyword id="KW-0539">Nucleus</keyword>
<keyword id="KW-0647">Proteasome</keyword>
<keyword id="KW-1185">Reference proteome</keyword>
<keyword id="KW-0346">Stress response</keyword>
<keyword id="KW-0832">Ubl conjugation</keyword>
<proteinExistence type="evidence at protein level"/>
<accession>Q9SZD4</accession>
<accession>Q9SEI5</accession>
<dbReference type="EMBL" id="AF123391">
    <property type="protein sequence ID" value="AAF22522.1"/>
    <property type="molecule type" value="mRNA"/>
</dbReference>
<dbReference type="EMBL" id="AB161192">
    <property type="protein sequence ID" value="BAD18016.1"/>
    <property type="molecule type" value="mRNA"/>
</dbReference>
<dbReference type="EMBL" id="AL078469">
    <property type="status" value="NOT_ANNOTATED_CDS"/>
    <property type="molecule type" value="Genomic_DNA"/>
</dbReference>
<dbReference type="EMBL" id="AL078470">
    <property type="protein sequence ID" value="CAB43918.1"/>
    <property type="molecule type" value="Genomic_DNA"/>
</dbReference>
<dbReference type="EMBL" id="AL161574">
    <property type="protein sequence ID" value="CAB79662.1"/>
    <property type="molecule type" value="Genomic_DNA"/>
</dbReference>
<dbReference type="EMBL" id="CP002687">
    <property type="protein sequence ID" value="AEE85578.1"/>
    <property type="molecule type" value="Genomic_DNA"/>
</dbReference>
<dbReference type="EMBL" id="AY034975">
    <property type="protein sequence ID" value="AAK59480.1"/>
    <property type="molecule type" value="mRNA"/>
</dbReference>
<dbReference type="PIR" id="T08959">
    <property type="entry name" value="T08959"/>
</dbReference>
<dbReference type="RefSeq" id="NP_194633.1">
    <property type="nucleotide sequence ID" value="NM_119048.4"/>
</dbReference>
<dbReference type="SMR" id="Q9SZD4"/>
<dbReference type="BioGRID" id="14312">
    <property type="interactions" value="305"/>
</dbReference>
<dbReference type="FunCoup" id="Q9SZD4">
    <property type="interactions" value="4095"/>
</dbReference>
<dbReference type="IntAct" id="Q9SZD4">
    <property type="interactions" value="37"/>
</dbReference>
<dbReference type="STRING" id="3702.Q9SZD4"/>
<dbReference type="PaxDb" id="3702-AT4G29040.1"/>
<dbReference type="ProteomicsDB" id="226478"/>
<dbReference type="EnsemblPlants" id="AT4G29040.1">
    <property type="protein sequence ID" value="AT4G29040.1"/>
    <property type="gene ID" value="AT4G29040"/>
</dbReference>
<dbReference type="GeneID" id="829025"/>
<dbReference type="Gramene" id="AT4G29040.1">
    <property type="protein sequence ID" value="AT4G29040.1"/>
    <property type="gene ID" value="AT4G29040"/>
</dbReference>
<dbReference type="KEGG" id="ath:AT4G29040"/>
<dbReference type="Araport" id="AT4G29040"/>
<dbReference type="TAIR" id="AT4G29040">
    <property type="gene designation" value="RPT2A"/>
</dbReference>
<dbReference type="eggNOG" id="KOG0726">
    <property type="taxonomic scope" value="Eukaryota"/>
</dbReference>
<dbReference type="HOGENOM" id="CLU_000688_2_3_1"/>
<dbReference type="InParanoid" id="Q9SZD4"/>
<dbReference type="OMA" id="QDDTDPM"/>
<dbReference type="OrthoDB" id="1071614at2759"/>
<dbReference type="PhylomeDB" id="Q9SZD4"/>
<dbReference type="PRO" id="PR:Q9SZD4"/>
<dbReference type="Proteomes" id="UP000006548">
    <property type="component" value="Chromosome 4"/>
</dbReference>
<dbReference type="ExpressionAtlas" id="Q9SZD4">
    <property type="expression patterns" value="baseline and differential"/>
</dbReference>
<dbReference type="GO" id="GO:0005634">
    <property type="term" value="C:nucleus"/>
    <property type="evidence" value="ECO:0000304"/>
    <property type="project" value="TAIR"/>
</dbReference>
<dbReference type="GO" id="GO:0000932">
    <property type="term" value="C:P-body"/>
    <property type="evidence" value="ECO:0007669"/>
    <property type="project" value="UniProtKB-SubCell"/>
</dbReference>
<dbReference type="GO" id="GO:0005886">
    <property type="term" value="C:plasma membrane"/>
    <property type="evidence" value="ECO:0007005"/>
    <property type="project" value="TAIR"/>
</dbReference>
<dbReference type="GO" id="GO:0000502">
    <property type="term" value="C:proteasome complex"/>
    <property type="evidence" value="ECO:0000314"/>
    <property type="project" value="TAIR"/>
</dbReference>
<dbReference type="GO" id="GO:0005524">
    <property type="term" value="F:ATP binding"/>
    <property type="evidence" value="ECO:0007669"/>
    <property type="project" value="UniProtKB-KW"/>
</dbReference>
<dbReference type="GO" id="GO:0016887">
    <property type="term" value="F:ATP hydrolysis activity"/>
    <property type="evidence" value="ECO:0007669"/>
    <property type="project" value="InterPro"/>
</dbReference>
<dbReference type="GO" id="GO:0007292">
    <property type="term" value="P:female gamete generation"/>
    <property type="evidence" value="ECO:0000316"/>
    <property type="project" value="TAIR"/>
</dbReference>
<dbReference type="GO" id="GO:0045087">
    <property type="term" value="P:innate immune response"/>
    <property type="evidence" value="ECO:0000315"/>
    <property type="project" value="UniProtKB"/>
</dbReference>
<dbReference type="GO" id="GO:0010311">
    <property type="term" value="P:lateral root formation"/>
    <property type="evidence" value="ECO:0000315"/>
    <property type="project" value="TAIR"/>
</dbReference>
<dbReference type="GO" id="GO:0009965">
    <property type="term" value="P:leaf morphogenesis"/>
    <property type="evidence" value="ECO:0000315"/>
    <property type="project" value="TAIR"/>
</dbReference>
<dbReference type="GO" id="GO:0010078">
    <property type="term" value="P:maintenance of root meristem identity"/>
    <property type="evidence" value="ECO:0000315"/>
    <property type="project" value="TAIR"/>
</dbReference>
<dbReference type="GO" id="GO:0048232">
    <property type="term" value="P:male gamete generation"/>
    <property type="evidence" value="ECO:0000316"/>
    <property type="project" value="TAIR"/>
</dbReference>
<dbReference type="GO" id="GO:0035266">
    <property type="term" value="P:meristem growth"/>
    <property type="evidence" value="ECO:0000315"/>
    <property type="project" value="TAIR"/>
</dbReference>
<dbReference type="GO" id="GO:0009933">
    <property type="term" value="P:meristem structural organization"/>
    <property type="evidence" value="ECO:0000315"/>
    <property type="project" value="TAIR"/>
</dbReference>
<dbReference type="GO" id="GO:0048827">
    <property type="term" value="P:phyllome development"/>
    <property type="evidence" value="ECO:0000315"/>
    <property type="project" value="TAIR"/>
</dbReference>
<dbReference type="GO" id="GO:0043248">
    <property type="term" value="P:proteasome assembly"/>
    <property type="evidence" value="ECO:0000315"/>
    <property type="project" value="TAIR"/>
</dbReference>
<dbReference type="GO" id="GO:0043161">
    <property type="term" value="P:proteasome-mediated ubiquitin-dependent protein catabolic process"/>
    <property type="evidence" value="ECO:0000315"/>
    <property type="project" value="TAIR"/>
</dbReference>
<dbReference type="GO" id="GO:0009408">
    <property type="term" value="P:response to heat"/>
    <property type="evidence" value="ECO:0000315"/>
    <property type="project" value="TAIR"/>
</dbReference>
<dbReference type="GO" id="GO:0051788">
    <property type="term" value="P:response to misfolded protein"/>
    <property type="evidence" value="ECO:0000315"/>
    <property type="project" value="TAIR"/>
</dbReference>
<dbReference type="GO" id="GO:0048829">
    <property type="term" value="P:root cap development"/>
    <property type="evidence" value="ECO:0000315"/>
    <property type="project" value="TAIR"/>
</dbReference>
<dbReference type="GO" id="GO:0048364">
    <property type="term" value="P:root development"/>
    <property type="evidence" value="ECO:0000315"/>
    <property type="project" value="TAIR"/>
</dbReference>
<dbReference type="GO" id="GO:0010015">
    <property type="term" value="P:root morphogenesis"/>
    <property type="evidence" value="ECO:0000315"/>
    <property type="project" value="TAIR"/>
</dbReference>
<dbReference type="GO" id="GO:0090351">
    <property type="term" value="P:seedling development"/>
    <property type="evidence" value="ECO:0000315"/>
    <property type="project" value="TAIR"/>
</dbReference>
<dbReference type="GO" id="GO:0048367">
    <property type="term" value="P:shoot system development"/>
    <property type="evidence" value="ECO:0000315"/>
    <property type="project" value="TAIR"/>
</dbReference>
<dbReference type="FunFam" id="2.40.50.140:FF:000067">
    <property type="entry name" value="26S protease regulatory subunit 4"/>
    <property type="match status" value="1"/>
</dbReference>
<dbReference type="FunFam" id="1.10.8.60:FF:000007">
    <property type="entry name" value="26S proteasome regulatory subunit 4"/>
    <property type="match status" value="1"/>
</dbReference>
<dbReference type="FunFam" id="3.40.50.300:FF:000039">
    <property type="entry name" value="26S proteasome regulatory subunit 4"/>
    <property type="match status" value="1"/>
</dbReference>
<dbReference type="Gene3D" id="1.10.8.60">
    <property type="match status" value="1"/>
</dbReference>
<dbReference type="Gene3D" id="2.40.50.140">
    <property type="entry name" value="Nucleic acid-binding proteins"/>
    <property type="match status" value="1"/>
</dbReference>
<dbReference type="Gene3D" id="3.40.50.300">
    <property type="entry name" value="P-loop containing nucleotide triphosphate hydrolases"/>
    <property type="match status" value="1"/>
</dbReference>
<dbReference type="InterPro" id="IPR050221">
    <property type="entry name" value="26S_Proteasome_ATPase"/>
</dbReference>
<dbReference type="InterPro" id="IPR003593">
    <property type="entry name" value="AAA+_ATPase"/>
</dbReference>
<dbReference type="InterPro" id="IPR041569">
    <property type="entry name" value="AAA_lid_3"/>
</dbReference>
<dbReference type="InterPro" id="IPR003959">
    <property type="entry name" value="ATPase_AAA_core"/>
</dbReference>
<dbReference type="InterPro" id="IPR003960">
    <property type="entry name" value="ATPase_AAA_CS"/>
</dbReference>
<dbReference type="InterPro" id="IPR012340">
    <property type="entry name" value="NA-bd_OB-fold"/>
</dbReference>
<dbReference type="InterPro" id="IPR027417">
    <property type="entry name" value="P-loop_NTPase"/>
</dbReference>
<dbReference type="InterPro" id="IPR032501">
    <property type="entry name" value="Prot_ATP_ID_OB_2nd"/>
</dbReference>
<dbReference type="PANTHER" id="PTHR23073">
    <property type="entry name" value="26S PROTEASOME REGULATORY SUBUNIT"/>
    <property type="match status" value="1"/>
</dbReference>
<dbReference type="Pfam" id="PF00004">
    <property type="entry name" value="AAA"/>
    <property type="match status" value="1"/>
</dbReference>
<dbReference type="Pfam" id="PF17862">
    <property type="entry name" value="AAA_lid_3"/>
    <property type="match status" value="1"/>
</dbReference>
<dbReference type="Pfam" id="PF16450">
    <property type="entry name" value="Prot_ATP_ID_OB_C"/>
    <property type="match status" value="1"/>
</dbReference>
<dbReference type="SMART" id="SM00382">
    <property type="entry name" value="AAA"/>
    <property type="match status" value="1"/>
</dbReference>
<dbReference type="SUPFAM" id="SSF52540">
    <property type="entry name" value="P-loop containing nucleoside triphosphate hydrolases"/>
    <property type="match status" value="1"/>
</dbReference>
<dbReference type="PROSITE" id="PS00674">
    <property type="entry name" value="AAA"/>
    <property type="match status" value="1"/>
</dbReference>
<protein>
    <recommendedName>
        <fullName evidence="19">26S proteasome regulatory subunit 4 homolog A</fullName>
    </recommendedName>
    <alternativeName>
        <fullName evidence="17">26S proteasome AAA-ATPase subunit RPT2a</fullName>
    </alternativeName>
    <alternativeName>
        <fullName evidence="19">26S proteasome subunit 4 homolog A</fullName>
    </alternativeName>
    <alternativeName>
        <fullName evidence="18">Protein HALTED ROOT</fullName>
    </alternativeName>
    <alternativeName>
        <fullName evidence="19">Regulatory particle triple-A ATPase subunit 2a</fullName>
    </alternativeName>
</protein>
<name>PRS4A_ARATH</name>
<comment type="function">
    <text evidence="5 6 7 8 10 11 12 13 14 15 16 20">The 26S protease is involved in the ATP-dependent degradation of ubiquitinated proteins. The regulatory (or ATPase) complex confers ATP dependency and substrate specificity to the 26S complex (Probable) (PubMed:22158466). Interacts with transit peptides of proteins targeted to the chloroplast, and may be involved in the degradation of unimported plastid protein precursors (PubMed:24846764). Is required for the maintenance of postembryonic root and shoot meristems (PubMed:15073153, PubMed:21784786). Has a specific role in the regulation of organs size (PubMed:19321709, PubMed:19500299). Acts redundantly with RPT2B in the regulation of gametogenesis (PubMed:21784786, PubMed:22158466). With RPT2B plays a critical role in 26S proteasome assembly (PubMed:22158466). Acts as an upstream signaling component for inducing both defense and morphological phenotypes in the constitutive active uni-1D mutant (PubMed:21791544). Acts as a negative regulator of endoreduplication in trichome cells (PubMed:20195883). May function after the completion of the third endoreduplication step (8C to 16C) mediated by RHL1 (PubMed:20195883). Acts as a negative regulator of transcriptional gene silencing (TGS) at specific endogenous genes through DNA methylation (PubMed:22615900). Promotes post-transcriptional gene silencing (PTGS) by limiting the degradation of transgene aberrant RNAs by the RNA quality control (RQC) machinery, thus favoring their entry into cytoplasmic siRNA bodies where they can trigger PTGS (PubMed:22615900). Involved in tolerance to zinc deficiency, possibly through alleviation of oxidative stresses or processing of poly-ubiquitinated proteins (PubMed:21389614). Required for resistance to the fungal pathogen Golovinomyces cichoracearum (PubMed:22577987).</text>
</comment>
<comment type="subunit">
    <text evidence="4 9 12">Component of the 19S regulatory particle (RP/PA700) base subcomplex of the 26S proteasome. The 26S proteasome is composed of a core protease (CP), known as the 20S proteasome, capped at one or both ends by the 19S regulatory particle (RP/PA700). The RP/PA700 complex is composed of at least 17 different subunits in two subcomplexes, the base and the lid, which form the portions proximal and distal to the 20S proteolytic core, respectively. Required for innate immunity (PubMed:14623884, PubMed:20516081). Interacts with UNI (PubMed:21791544).</text>
</comment>
<comment type="subcellular location">
    <subcellularLocation>
        <location evidence="15">Cytoplasm</location>
        <location evidence="15">P-body</location>
    </subcellularLocation>
    <subcellularLocation>
        <location evidence="15">Nucleus</location>
    </subcellularLocation>
    <text evidence="15">Localizes to siRNA-bodies in the cytoplasm.</text>
</comment>
<comment type="tissue specificity">
    <text evidence="5 7">Preferentially expressed in the root and shoot apical meristem.</text>
</comment>
<comment type="induction">
    <text evidence="13">Induced by treatment with the proteasome inhibitor MG132.</text>
</comment>
<comment type="disruption phenotype">
    <text evidence="11 13">Displays disruption of cellular organization in the postembryonic root and shoot apical meristems. Leads to decreased 26SP accumulation, resulting in reduced rates of Ub-dependent proteolysis. Shows hypersensitivity to heat shock and increased oxidative stress tolerance. Displays enlarged leaves, stems, flowers, fruits, seeds and embryos, caused by increased cell size and shows increased branch number and nuclear size of trichomes, in correlation with increased ploidy. Mutant displays enhanced susceptibility to the fungal pathogen Golovinomyces cichoracearum. The double mutants rpt2a and rpt2b are blocked in both male and female gametogenesis (PubMed:21784786, PubMed:22158466).</text>
</comment>
<comment type="similarity">
    <text evidence="19">Belongs to the AAA ATPase family.</text>
</comment>
<evidence type="ECO:0000250" key="1">
    <source>
        <dbReference type="UniProtKB" id="Q9SEI2"/>
    </source>
</evidence>
<evidence type="ECO:0000255" key="2"/>
<evidence type="ECO:0000256" key="3">
    <source>
        <dbReference type="SAM" id="MobiDB-lite"/>
    </source>
</evidence>
<evidence type="ECO:0000269" key="4">
    <source>
    </source>
</evidence>
<evidence type="ECO:0000269" key="5">
    <source>
    </source>
</evidence>
<evidence type="ECO:0000269" key="6">
    <source>
    </source>
</evidence>
<evidence type="ECO:0000269" key="7">
    <source>
    </source>
</evidence>
<evidence type="ECO:0000269" key="8">
    <source>
    </source>
</evidence>
<evidence type="ECO:0000269" key="9">
    <source>
    </source>
</evidence>
<evidence type="ECO:0000269" key="10">
    <source>
    </source>
</evidence>
<evidence type="ECO:0000269" key="11">
    <source>
    </source>
</evidence>
<evidence type="ECO:0000269" key="12">
    <source>
    </source>
</evidence>
<evidence type="ECO:0000269" key="13">
    <source>
    </source>
</evidence>
<evidence type="ECO:0000269" key="14">
    <source>
    </source>
</evidence>
<evidence type="ECO:0000269" key="15">
    <source>
    </source>
</evidence>
<evidence type="ECO:0000269" key="16">
    <source>
    </source>
</evidence>
<evidence type="ECO:0000303" key="17">
    <source>
    </source>
</evidence>
<evidence type="ECO:0000303" key="18">
    <source>
    </source>
</evidence>
<evidence type="ECO:0000305" key="19"/>
<evidence type="ECO:0000305" key="20">
    <source>
    </source>
</evidence>
<evidence type="ECO:0000312" key="21">
    <source>
        <dbReference type="Araport" id="AT4G29040"/>
    </source>
</evidence>
<evidence type="ECO:0000312" key="22">
    <source>
        <dbReference type="EMBL" id="CAB43918.1"/>
    </source>
</evidence>
<reference key="1">
    <citation type="journal article" date="1999" name="Plant J.">
        <title>Structural and functional analysis of the six regulatory particle triple-A ATPase subunits from the Arabidopsis 26S proteasome.</title>
        <authorList>
            <person name="Fu H."/>
            <person name="Doelling J.H."/>
            <person name="Rubin D.M."/>
            <person name="Vierstra R.D."/>
        </authorList>
    </citation>
    <scope>NUCLEOTIDE SEQUENCE [MRNA]</scope>
    <scope>GENE FAMILY</scope>
    <scope>NOMENCLATURE</scope>
    <source>
        <strain>cv. Columbia</strain>
    </source>
</reference>
<reference key="2">
    <citation type="journal article" date="2004" name="Development">
        <title>The HALTED ROOT gene encoding the 26S proteasome subunit RPT2a is essential for the maintenance of Arabidopsis meristems.</title>
        <authorList>
            <person name="Ueda M."/>
            <person name="Matsui K."/>
            <person name="Ishiguro S."/>
            <person name="Sano R."/>
            <person name="Wada T."/>
            <person name="Paponov I."/>
            <person name="Palme K."/>
            <person name="Okada K."/>
        </authorList>
    </citation>
    <scope>NUCLEOTIDE SEQUENCE [MRNA]</scope>
    <scope>TISSUE SPECIFICITY</scope>
    <scope>DISRUPTION PHENOTYPE</scope>
    <scope>FUNCTION</scope>
</reference>
<reference key="3">
    <citation type="journal article" date="1999" name="Nature">
        <title>Sequence and analysis of chromosome 4 of the plant Arabidopsis thaliana.</title>
        <authorList>
            <person name="Mayer K.F.X."/>
            <person name="Schueller C."/>
            <person name="Wambutt R."/>
            <person name="Murphy G."/>
            <person name="Volckaert G."/>
            <person name="Pohl T."/>
            <person name="Duesterhoeft A."/>
            <person name="Stiekema W."/>
            <person name="Entian K.-D."/>
            <person name="Terryn N."/>
            <person name="Harris B."/>
            <person name="Ansorge W."/>
            <person name="Brandt P."/>
            <person name="Grivell L.A."/>
            <person name="Rieger M."/>
            <person name="Weichselgartner M."/>
            <person name="de Simone V."/>
            <person name="Obermaier B."/>
            <person name="Mache R."/>
            <person name="Mueller M."/>
            <person name="Kreis M."/>
            <person name="Delseny M."/>
            <person name="Puigdomenech P."/>
            <person name="Watson M."/>
            <person name="Schmidtheini T."/>
            <person name="Reichert B."/>
            <person name="Portetelle D."/>
            <person name="Perez-Alonso M."/>
            <person name="Boutry M."/>
            <person name="Bancroft I."/>
            <person name="Vos P."/>
            <person name="Hoheisel J."/>
            <person name="Zimmermann W."/>
            <person name="Wedler H."/>
            <person name="Ridley P."/>
            <person name="Langham S.-A."/>
            <person name="McCullagh B."/>
            <person name="Bilham L."/>
            <person name="Robben J."/>
            <person name="van der Schueren J."/>
            <person name="Grymonprez B."/>
            <person name="Chuang Y.-J."/>
            <person name="Vandenbussche F."/>
            <person name="Braeken M."/>
            <person name="Weltjens I."/>
            <person name="Voet M."/>
            <person name="Bastiaens I."/>
            <person name="Aert R."/>
            <person name="Defoor E."/>
            <person name="Weitzenegger T."/>
            <person name="Bothe G."/>
            <person name="Ramsperger U."/>
            <person name="Hilbert H."/>
            <person name="Braun M."/>
            <person name="Holzer E."/>
            <person name="Brandt A."/>
            <person name="Peters S."/>
            <person name="van Staveren M."/>
            <person name="Dirkse W."/>
            <person name="Mooijman P."/>
            <person name="Klein Lankhorst R."/>
            <person name="Rose M."/>
            <person name="Hauf J."/>
            <person name="Koetter P."/>
            <person name="Berneiser S."/>
            <person name="Hempel S."/>
            <person name="Feldpausch M."/>
            <person name="Lamberth S."/>
            <person name="Van den Daele H."/>
            <person name="De Keyser A."/>
            <person name="Buysshaert C."/>
            <person name="Gielen J."/>
            <person name="Villarroel R."/>
            <person name="De Clercq R."/>
            <person name="van Montagu M."/>
            <person name="Rogers J."/>
            <person name="Cronin A."/>
            <person name="Quail M.A."/>
            <person name="Bray-Allen S."/>
            <person name="Clark L."/>
            <person name="Doggett J."/>
            <person name="Hall S."/>
            <person name="Kay M."/>
            <person name="Lennard N."/>
            <person name="McLay K."/>
            <person name="Mayes R."/>
            <person name="Pettett A."/>
            <person name="Rajandream M.A."/>
            <person name="Lyne M."/>
            <person name="Benes V."/>
            <person name="Rechmann S."/>
            <person name="Borkova D."/>
            <person name="Bloecker H."/>
            <person name="Scharfe M."/>
            <person name="Grimm M."/>
            <person name="Loehnert T.-H."/>
            <person name="Dose S."/>
            <person name="de Haan M."/>
            <person name="Maarse A.C."/>
            <person name="Schaefer M."/>
            <person name="Mueller-Auer S."/>
            <person name="Gabel C."/>
            <person name="Fuchs M."/>
            <person name="Fartmann B."/>
            <person name="Granderath K."/>
            <person name="Dauner D."/>
            <person name="Herzl A."/>
            <person name="Neumann S."/>
            <person name="Argiriou A."/>
            <person name="Vitale D."/>
            <person name="Liguori R."/>
            <person name="Piravandi E."/>
            <person name="Massenet O."/>
            <person name="Quigley F."/>
            <person name="Clabauld G."/>
            <person name="Muendlein A."/>
            <person name="Felber R."/>
            <person name="Schnabl S."/>
            <person name="Hiller R."/>
            <person name="Schmidt W."/>
            <person name="Lecharny A."/>
            <person name="Aubourg S."/>
            <person name="Chefdor F."/>
            <person name="Cooke R."/>
            <person name="Berger C."/>
            <person name="Monfort A."/>
            <person name="Casacuberta E."/>
            <person name="Gibbons T."/>
            <person name="Weber N."/>
            <person name="Vandenbol M."/>
            <person name="Bargues M."/>
            <person name="Terol J."/>
            <person name="Torres A."/>
            <person name="Perez-Perez A."/>
            <person name="Purnelle B."/>
            <person name="Bent E."/>
            <person name="Johnson S."/>
            <person name="Tacon D."/>
            <person name="Jesse T."/>
            <person name="Heijnen L."/>
            <person name="Schwarz S."/>
            <person name="Scholler P."/>
            <person name="Heber S."/>
            <person name="Francs P."/>
            <person name="Bielke C."/>
            <person name="Frishman D."/>
            <person name="Haase D."/>
            <person name="Lemcke K."/>
            <person name="Mewes H.-W."/>
            <person name="Stocker S."/>
            <person name="Zaccaria P."/>
            <person name="Bevan M."/>
            <person name="Wilson R.K."/>
            <person name="de la Bastide M."/>
            <person name="Habermann K."/>
            <person name="Parnell L."/>
            <person name="Dedhia N."/>
            <person name="Gnoj L."/>
            <person name="Schutz K."/>
            <person name="Huang E."/>
            <person name="Spiegel L."/>
            <person name="Sekhon M."/>
            <person name="Murray J."/>
            <person name="Sheet P."/>
            <person name="Cordes M."/>
            <person name="Abu-Threideh J."/>
            <person name="Stoneking T."/>
            <person name="Kalicki J."/>
            <person name="Graves T."/>
            <person name="Harmon G."/>
            <person name="Edwards J."/>
            <person name="Latreille P."/>
            <person name="Courtney L."/>
            <person name="Cloud J."/>
            <person name="Abbott A."/>
            <person name="Scott K."/>
            <person name="Johnson D."/>
            <person name="Minx P."/>
            <person name="Bentley D."/>
            <person name="Fulton B."/>
            <person name="Miller N."/>
            <person name="Greco T."/>
            <person name="Kemp K."/>
            <person name="Kramer J."/>
            <person name="Fulton L."/>
            <person name="Mardis E."/>
            <person name="Dante M."/>
            <person name="Pepin K."/>
            <person name="Hillier L.W."/>
            <person name="Nelson J."/>
            <person name="Spieth J."/>
            <person name="Ryan E."/>
            <person name="Andrews S."/>
            <person name="Geisel C."/>
            <person name="Layman D."/>
            <person name="Du H."/>
            <person name="Ali J."/>
            <person name="Berghoff A."/>
            <person name="Jones K."/>
            <person name="Drone K."/>
            <person name="Cotton M."/>
            <person name="Joshu C."/>
            <person name="Antonoiu B."/>
            <person name="Zidanic M."/>
            <person name="Strong C."/>
            <person name="Sun H."/>
            <person name="Lamar B."/>
            <person name="Yordan C."/>
            <person name="Ma P."/>
            <person name="Zhong J."/>
            <person name="Preston R."/>
            <person name="Vil D."/>
            <person name="Shekher M."/>
            <person name="Matero A."/>
            <person name="Shah R."/>
            <person name="Swaby I.K."/>
            <person name="O'Shaughnessy A."/>
            <person name="Rodriguez M."/>
            <person name="Hoffman J."/>
            <person name="Till S."/>
            <person name="Granat S."/>
            <person name="Shohdy N."/>
            <person name="Hasegawa A."/>
            <person name="Hameed A."/>
            <person name="Lodhi M."/>
            <person name="Johnson A."/>
            <person name="Chen E."/>
            <person name="Marra M.A."/>
            <person name="Martienssen R."/>
            <person name="McCombie W.R."/>
        </authorList>
    </citation>
    <scope>NUCLEOTIDE SEQUENCE [LARGE SCALE GENOMIC DNA]</scope>
    <source>
        <strain>cv. Columbia</strain>
    </source>
</reference>
<reference key="4">
    <citation type="journal article" date="2017" name="Plant J.">
        <title>Araport11: a complete reannotation of the Arabidopsis thaliana reference genome.</title>
        <authorList>
            <person name="Cheng C.Y."/>
            <person name="Krishnakumar V."/>
            <person name="Chan A.P."/>
            <person name="Thibaud-Nissen F."/>
            <person name="Schobel S."/>
            <person name="Town C.D."/>
        </authorList>
    </citation>
    <scope>GENOME REANNOTATION</scope>
    <source>
        <strain>cv. Columbia</strain>
    </source>
</reference>
<reference key="5">
    <citation type="journal article" date="2003" name="Science">
        <title>Empirical analysis of transcriptional activity in the Arabidopsis genome.</title>
        <authorList>
            <person name="Yamada K."/>
            <person name="Lim J."/>
            <person name="Dale J.M."/>
            <person name="Chen H."/>
            <person name="Shinn P."/>
            <person name="Palm C.J."/>
            <person name="Southwick A.M."/>
            <person name="Wu H.C."/>
            <person name="Kim C.J."/>
            <person name="Nguyen M."/>
            <person name="Pham P.K."/>
            <person name="Cheuk R.F."/>
            <person name="Karlin-Newmann G."/>
            <person name="Liu S.X."/>
            <person name="Lam B."/>
            <person name="Sakano H."/>
            <person name="Wu T."/>
            <person name="Yu G."/>
            <person name="Miranda M."/>
            <person name="Quach H.L."/>
            <person name="Tripp M."/>
            <person name="Chang C.H."/>
            <person name="Lee J.M."/>
            <person name="Toriumi M.J."/>
            <person name="Chan M.M."/>
            <person name="Tang C.C."/>
            <person name="Onodera C.S."/>
            <person name="Deng J.M."/>
            <person name="Akiyama K."/>
            <person name="Ansari Y."/>
            <person name="Arakawa T."/>
            <person name="Banh J."/>
            <person name="Banno F."/>
            <person name="Bowser L."/>
            <person name="Brooks S.Y."/>
            <person name="Carninci P."/>
            <person name="Chao Q."/>
            <person name="Choy N."/>
            <person name="Enju A."/>
            <person name="Goldsmith A.D."/>
            <person name="Gurjal M."/>
            <person name="Hansen N.F."/>
            <person name="Hayashizaki Y."/>
            <person name="Johnson-Hopson C."/>
            <person name="Hsuan V.W."/>
            <person name="Iida K."/>
            <person name="Karnes M."/>
            <person name="Khan S."/>
            <person name="Koesema E."/>
            <person name="Ishida J."/>
            <person name="Jiang P.X."/>
            <person name="Jones T."/>
            <person name="Kawai J."/>
            <person name="Kamiya A."/>
            <person name="Meyers C."/>
            <person name="Nakajima M."/>
            <person name="Narusaka M."/>
            <person name="Seki M."/>
            <person name="Sakurai T."/>
            <person name="Satou M."/>
            <person name="Tamse R."/>
            <person name="Vaysberg M."/>
            <person name="Wallender E.K."/>
            <person name="Wong C."/>
            <person name="Yamamura Y."/>
            <person name="Yuan S."/>
            <person name="Shinozaki K."/>
            <person name="Davis R.W."/>
            <person name="Theologis A."/>
            <person name="Ecker J.R."/>
        </authorList>
    </citation>
    <scope>NUCLEOTIDE SEQUENCE [LARGE SCALE MRNA]</scope>
    <source>
        <strain>cv. Columbia</strain>
    </source>
</reference>
<reference key="6">
    <citation type="journal article" date="2004" name="J. Biol. Chem.">
        <title>Purification of the Arabidopsis 26 S proteasome: biochemical and molecular analyses revealed the presence of multiple isoforms.</title>
        <authorList>
            <person name="Yang P."/>
            <person name="Fu H."/>
            <person name="Walker J."/>
            <person name="Papa C.M."/>
            <person name="Smalle J."/>
            <person name="Ju Y.-M."/>
            <person name="Vierstra R.D."/>
        </authorList>
    </citation>
    <scope>SUBUNIT</scope>
    <scope>IDENTIFICATION BY MASS SPECTROMETRY</scope>
</reference>
<reference key="7">
    <citation type="journal article" date="2008" name="Plant J.">
        <title>26S proteasome regulatory particle mutants have increased oxidative stress tolerance.</title>
        <authorList>
            <person name="Kurepa J."/>
            <person name="Toh-E A."/>
            <person name="Smalle J.A."/>
        </authorList>
    </citation>
    <scope>DISRUPTION PHENOTYPE</scope>
    <scope>FUNCTION</scope>
</reference>
<reference key="8">
    <citation type="journal article" date="2009" name="Plant J.">
        <title>Regulation of leaf organ size by the Arabidopsis RPT2a 19S proteasome subunit.</title>
        <authorList>
            <person name="Sonoda Y."/>
            <person name="Sako K."/>
            <person name="Maki Y."/>
            <person name="Yamazaki N."/>
            <person name="Yamamoto H."/>
            <person name="Ikeda A."/>
            <person name="Yamaguchi J."/>
        </authorList>
    </citation>
    <scope>DISRUPTION PHENOTYPE</scope>
    <scope>TISSUE SPECIFICITY</scope>
    <scope>FUNCTION</scope>
</reference>
<reference key="9">
    <citation type="journal article" date="2009" name="Plant Physiol.">
        <title>Loss of 26S proteasome function leads to increased cell size and decreased cell number in Arabidopsis shoot organs.</title>
        <authorList>
            <person name="Kurepa J."/>
            <person name="Wang S."/>
            <person name="Li Y."/>
            <person name="Zaitlin D."/>
            <person name="Pierce A.J."/>
            <person name="Smalle J.A."/>
        </authorList>
    </citation>
    <scope>DISRUPTION PHENOTYPE</scope>
    <scope>FUNCTION</scope>
</reference>
<reference key="10">
    <citation type="journal article" date="2010" name="J. Biol. Chem.">
        <title>Affinity purification of the Arabidopsis 26 S proteasome reveals a diverse array of plant proteolytic complexes.</title>
        <authorList>
            <person name="Book A.J."/>
            <person name="Gladman N.P."/>
            <person name="Lee S.S."/>
            <person name="Scalf M."/>
            <person name="Smith L.M."/>
            <person name="Vierstra R.D."/>
        </authorList>
    </citation>
    <scope>IDENTIFICATION BY MASS SPECTROMETRY</scope>
    <scope>CHARACTERIZATION OF THE 26S PROTEASOME COMPLEX</scope>
    <scope>SUBUNIT</scope>
</reference>
<reference key="11">
    <citation type="journal article" date="2010" name="J. Plant Res.">
        <title>Control of endoreduplication of trichome by RPT2a, a subunit of the 19S proteasome in Arabidopsis.</title>
        <authorList>
            <person name="Sako K."/>
            <person name="Maki Y."/>
            <person name="Aoyama T."/>
            <person name="Goto D.B."/>
            <person name="Yamaguchi J."/>
        </authorList>
    </citation>
    <scope>FUNCTION</scope>
</reference>
<reference key="12">
    <citation type="journal article" date="2011" name="Biosci. Biotechnol. Biochem.">
        <title>Arabidopsis thaliana 26S proteasome subunits RPT2a and RPT5a are crucial for zinc deficiency-tolerance.</title>
        <authorList>
            <person name="Sakamoto T."/>
            <person name="Kamiya T."/>
            <person name="Sako K."/>
            <person name="Yamaguchi J."/>
            <person name="Yamagami M."/>
            <person name="Fujiwara T."/>
        </authorList>
    </citation>
    <scope>FUNCTION</scope>
</reference>
<reference key="13">
    <citation type="journal article" date="2011" name="Plant Cell">
        <title>The RPT2 subunit of the 26S proteasome directs complex assembly, histone dynamics, and gametophyte and sporophyte development in Arabidopsis.</title>
        <authorList>
            <person name="Lee K.H."/>
            <person name="Minami A."/>
            <person name="Marshall R.S."/>
            <person name="Book A.J."/>
            <person name="Farmer L.M."/>
            <person name="Walker J.M."/>
            <person name="Vierstra R.D."/>
        </authorList>
    </citation>
    <scope>IDENTIFICATION BY MASS SPECTROMETRY</scope>
    <scope>FUNCTION</scope>
    <scope>INDUCTION BY PROTEASOME INHIBITOR MG132</scope>
    <scope>DISRUPTION PHENOTYPE</scope>
</reference>
<reference key="14">
    <citation type="journal article" date="2011" name="Plant Cell Physiol.">
        <title>Arabidopsis RPT2a encoding the 26S proteasome subunit is required for various aspects of root meristem maintenance, and regulates gametogenesis redundantly with its homolog, RPT2b.</title>
        <authorList>
            <person name="Ueda M."/>
            <person name="Matsui K."/>
            <person name="Ishiguro S."/>
            <person name="Kato T."/>
            <person name="Tabata S."/>
            <person name="Kobayashi M."/>
            <person name="Seki M."/>
            <person name="Shinozaki K."/>
            <person name="Okada K."/>
        </authorList>
    </citation>
    <scope>FUNCTION</scope>
    <scope>DISRUPTION PHENOTYPE</scope>
</reference>
<reference key="15">
    <citation type="journal article" date="2011" name="Plant Cell Physiol.">
        <title>RPT2a, a 26S proteasome AAA-ATPase, is directly involved in Arabidopsis CC-NBS-LRR protein uni-1D-induced signaling pathways.</title>
        <authorList>
            <person name="Chung K."/>
            <person name="Tasaka M."/>
        </authorList>
    </citation>
    <scope>FUNCTION</scope>
    <scope>INTERACTION WITH UNI</scope>
</reference>
<reference key="16">
    <citation type="journal article" date="2012" name="Plant J.">
        <title>RPN1a, a 26S proteasome subunit, is required for innate immunity in Arabidopsis.</title>
        <authorList>
            <person name="Yao C."/>
            <person name="Wu Y."/>
            <person name="Nie H."/>
            <person name="Tang D."/>
        </authorList>
    </citation>
    <scope>FUNCTION</scope>
    <scope>DISRUPTION PHENOTYPE</scope>
</reference>
<reference key="17">
    <citation type="journal article" date="2014" name="J. Proteome Res.">
        <title>Proteomic analysis of the 26S proteasome reveals its direct interaction with transit peptides of plastid protein precursors for their degradation.</title>
        <authorList>
            <person name="Sako K."/>
            <person name="Yanagawa Y."/>
            <person name="Kanai T."/>
            <person name="Sato T."/>
            <person name="Seki M."/>
            <person name="Fujiwara M."/>
            <person name="Fukao Y."/>
            <person name="Yamaguchi J."/>
        </authorList>
    </citation>
    <scope>FUNCTION</scope>
</reference>
<reference key="18">
    <citation type="journal article" date="2012" name="PLoS ONE">
        <title>Arabidopsis RPT2a, 19S proteasome subunit, regulates gene silencing via DNA methylation.</title>
        <authorList>
            <person name="Sako K."/>
            <person name="Maki Y."/>
            <person name="Kanai T."/>
            <person name="Kato E."/>
            <person name="Maekawa S."/>
            <person name="Yasuda S."/>
            <person name="Sato T."/>
            <person name="Watahiki M.K."/>
            <person name="Yamaguchi J."/>
        </authorList>
    </citation>
    <scope>FUNCTION</scope>
    <scope>SUBCELLULAR LOCATION</scope>
</reference>
<feature type="chain" id="PRO_0000391483" description="26S proteasome regulatory subunit 4 homolog A">
    <location>
        <begin position="1"/>
        <end position="443"/>
    </location>
</feature>
<feature type="region of interest" description="Disordered" evidence="3">
    <location>
        <begin position="1"/>
        <end position="55"/>
    </location>
</feature>
<feature type="region of interest" description="Disordered" evidence="3">
    <location>
        <begin position="87"/>
        <end position="108"/>
    </location>
</feature>
<feature type="compositionally biased region" description="Basic and acidic residues" evidence="3">
    <location>
        <begin position="12"/>
        <end position="28"/>
    </location>
</feature>
<feature type="compositionally biased region" description="Basic and acidic residues" evidence="3">
    <location>
        <begin position="87"/>
        <end position="106"/>
    </location>
</feature>
<feature type="binding site" evidence="2">
    <location>
        <begin position="229"/>
        <end position="236"/>
    </location>
    <ligand>
        <name>ATP</name>
        <dbReference type="ChEBI" id="CHEBI:30616"/>
    </ligand>
</feature>
<feature type="cross-link" description="Glycyl lysine isopeptide (Lys-Gly) (interchain with G-Cter in ubiquitin)" evidence="1">
    <location>
        <position position="296"/>
    </location>
</feature>
<feature type="cross-link" description="Glycyl lysine isopeptide (Lys-Gly) (interchain with G-Cter in ubiquitin)" evidence="1">
    <location>
        <position position="433"/>
    </location>
</feature>
<feature type="sequence conflict" description="In Ref. 1; AAF22522." evidence="19" ref="1">
    <original>G</original>
    <variation>V</variation>
    <location>
        <position position="37"/>
    </location>
</feature>
<organism>
    <name type="scientific">Arabidopsis thaliana</name>
    <name type="common">Mouse-ear cress</name>
    <dbReference type="NCBI Taxonomy" id="3702"/>
    <lineage>
        <taxon>Eukaryota</taxon>
        <taxon>Viridiplantae</taxon>
        <taxon>Streptophyta</taxon>
        <taxon>Embryophyta</taxon>
        <taxon>Tracheophyta</taxon>
        <taxon>Spermatophyta</taxon>
        <taxon>Magnoliopsida</taxon>
        <taxon>eudicotyledons</taxon>
        <taxon>Gunneridae</taxon>
        <taxon>Pentapetalae</taxon>
        <taxon>rosids</taxon>
        <taxon>malvids</taxon>
        <taxon>Brassicales</taxon>
        <taxon>Brassicaceae</taxon>
        <taxon>Camelineae</taxon>
        <taxon>Arabidopsis</taxon>
    </lineage>
</organism>
<gene>
    <name evidence="17" type="primary">RPT2A</name>
    <name evidence="18" type="synonym">HLR</name>
    <name evidence="21" type="ordered locus">At4g29040</name>
    <name evidence="22" type="ORF">F19B15.70</name>
    <name type="ORF">F25O24.6</name>
</gene>
<sequence>MGQGPSGGLNRQGDRKPDGGDKKEKKFEPAAPPARVGRKQRKQKGPEAAARLPTVTPSTKCKLRLLKLERIKDYLLMEEEFVANQERLKPQEEKAEEDRSKVDDLRGTPMSVGNLEELIDENHAIVSSSVGPEYYVGILSFVDKDQLEPGCSILMHNKVLSVVGILQDEVDPMVSVMKVEKAPLESYADIGGLEAQIQEIKEAVELPLTHPELYEDIGIKPPKGVILYGEPGTGKTLLAKAVANSTSATFLRVVGSELIQKYLGDGPKLVRELFRVADDLSPSIVFIDEIDAVGTKRYDAHSGGEREIQRTMLELLNQLDGFDSRGDVKVILATNRIESLDPALLRPGRIDRKIEFPLPDIKTRRRIFQIHTSKMTLSEDVNLEEFVMTKDEFSGADIKAICTEAGLLALRERRMKVTHPDFKKAKEKVMFKKKEGVPEGLYM</sequence>